<dbReference type="EMBL" id="AF160598">
    <property type="protein sequence ID" value="AAF15214.1"/>
    <property type="molecule type" value="Genomic_DNA"/>
</dbReference>
<dbReference type="EMBL" id="AF160599">
    <property type="protein sequence ID" value="AAF15215.1"/>
    <property type="molecule type" value="Genomic_DNA"/>
</dbReference>
<dbReference type="SMR" id="Q9T3Q2"/>
<dbReference type="GO" id="GO:0005743">
    <property type="term" value="C:mitochondrial inner membrane"/>
    <property type="evidence" value="ECO:0007669"/>
    <property type="project" value="UniProtKB-SubCell"/>
</dbReference>
<dbReference type="GO" id="GO:0045275">
    <property type="term" value="C:respiratory chain complex III"/>
    <property type="evidence" value="ECO:0007669"/>
    <property type="project" value="InterPro"/>
</dbReference>
<dbReference type="GO" id="GO:0046872">
    <property type="term" value="F:metal ion binding"/>
    <property type="evidence" value="ECO:0007669"/>
    <property type="project" value="UniProtKB-KW"/>
</dbReference>
<dbReference type="GO" id="GO:0008121">
    <property type="term" value="F:ubiquinol-cytochrome-c reductase activity"/>
    <property type="evidence" value="ECO:0007669"/>
    <property type="project" value="InterPro"/>
</dbReference>
<dbReference type="GO" id="GO:0006122">
    <property type="term" value="P:mitochondrial electron transport, ubiquinol to cytochrome c"/>
    <property type="evidence" value="ECO:0007669"/>
    <property type="project" value="TreeGrafter"/>
</dbReference>
<dbReference type="CDD" id="cd00290">
    <property type="entry name" value="cytochrome_b_C"/>
    <property type="match status" value="1"/>
</dbReference>
<dbReference type="CDD" id="cd00284">
    <property type="entry name" value="Cytochrome_b_N"/>
    <property type="match status" value="1"/>
</dbReference>
<dbReference type="FunFam" id="1.20.810.10:FF:000002">
    <property type="entry name" value="Cytochrome b"/>
    <property type="match status" value="1"/>
</dbReference>
<dbReference type="Gene3D" id="1.20.810.10">
    <property type="entry name" value="Cytochrome Bc1 Complex, Chain C"/>
    <property type="match status" value="1"/>
</dbReference>
<dbReference type="InterPro" id="IPR005798">
    <property type="entry name" value="Cyt_b/b6_C"/>
</dbReference>
<dbReference type="InterPro" id="IPR036150">
    <property type="entry name" value="Cyt_b/b6_C_sf"/>
</dbReference>
<dbReference type="InterPro" id="IPR005797">
    <property type="entry name" value="Cyt_b/b6_N"/>
</dbReference>
<dbReference type="InterPro" id="IPR027387">
    <property type="entry name" value="Cytb/b6-like_sf"/>
</dbReference>
<dbReference type="InterPro" id="IPR030689">
    <property type="entry name" value="Cytochrome_b"/>
</dbReference>
<dbReference type="InterPro" id="IPR048260">
    <property type="entry name" value="Cytochrome_b_C_euk/bac"/>
</dbReference>
<dbReference type="InterPro" id="IPR048259">
    <property type="entry name" value="Cytochrome_b_N_euk/bac"/>
</dbReference>
<dbReference type="InterPro" id="IPR016174">
    <property type="entry name" value="Di-haem_cyt_TM"/>
</dbReference>
<dbReference type="PANTHER" id="PTHR19271">
    <property type="entry name" value="CYTOCHROME B"/>
    <property type="match status" value="1"/>
</dbReference>
<dbReference type="PANTHER" id="PTHR19271:SF16">
    <property type="entry name" value="CYTOCHROME B"/>
    <property type="match status" value="1"/>
</dbReference>
<dbReference type="Pfam" id="PF00032">
    <property type="entry name" value="Cytochrom_B_C"/>
    <property type="match status" value="1"/>
</dbReference>
<dbReference type="Pfam" id="PF00033">
    <property type="entry name" value="Cytochrome_B"/>
    <property type="match status" value="1"/>
</dbReference>
<dbReference type="PIRSF" id="PIRSF038885">
    <property type="entry name" value="COB"/>
    <property type="match status" value="1"/>
</dbReference>
<dbReference type="SUPFAM" id="SSF81648">
    <property type="entry name" value="a domain/subunit of cytochrome bc1 complex (Ubiquinol-cytochrome c reductase)"/>
    <property type="match status" value="1"/>
</dbReference>
<dbReference type="SUPFAM" id="SSF81342">
    <property type="entry name" value="Transmembrane di-heme cytochromes"/>
    <property type="match status" value="1"/>
</dbReference>
<dbReference type="PROSITE" id="PS51003">
    <property type="entry name" value="CYTB_CTER"/>
    <property type="match status" value="1"/>
</dbReference>
<dbReference type="PROSITE" id="PS51002">
    <property type="entry name" value="CYTB_NTER"/>
    <property type="match status" value="1"/>
</dbReference>
<geneLocation type="mitochondrion"/>
<evidence type="ECO:0000250" key="1"/>
<evidence type="ECO:0000250" key="2">
    <source>
        <dbReference type="UniProtKB" id="P00157"/>
    </source>
</evidence>
<evidence type="ECO:0000255" key="3">
    <source>
        <dbReference type="PROSITE-ProRule" id="PRU00967"/>
    </source>
</evidence>
<evidence type="ECO:0000255" key="4">
    <source>
        <dbReference type="PROSITE-ProRule" id="PRU00968"/>
    </source>
</evidence>
<protein>
    <recommendedName>
        <fullName>Cytochrome b</fullName>
    </recommendedName>
    <alternativeName>
        <fullName>Complex III subunit 3</fullName>
    </alternativeName>
    <alternativeName>
        <fullName>Complex III subunit III</fullName>
    </alternativeName>
    <alternativeName>
        <fullName>Cytochrome b-c1 complex subunit 3</fullName>
    </alternativeName>
    <alternativeName>
        <fullName>Ubiquinol-cytochrome-c reductase complex cytochrome b subunit</fullName>
    </alternativeName>
</protein>
<gene>
    <name type="primary">MT-CYB</name>
    <name type="synonym">COB</name>
    <name type="synonym">CYTB</name>
    <name type="synonym">MTCYB</name>
</gene>
<keyword id="KW-0249">Electron transport</keyword>
<keyword id="KW-0349">Heme</keyword>
<keyword id="KW-0408">Iron</keyword>
<keyword id="KW-0472">Membrane</keyword>
<keyword id="KW-0479">Metal-binding</keyword>
<keyword id="KW-0496">Mitochondrion</keyword>
<keyword id="KW-0999">Mitochondrion inner membrane</keyword>
<keyword id="KW-0679">Respiratory chain</keyword>
<keyword id="KW-0812">Transmembrane</keyword>
<keyword id="KW-1133">Transmembrane helix</keyword>
<keyword id="KW-0813">Transport</keyword>
<keyword id="KW-0830">Ubiquinone</keyword>
<feature type="chain" id="PRO_0000061617" description="Cytochrome b">
    <location>
        <begin position="1"/>
        <end position="380"/>
    </location>
</feature>
<feature type="transmembrane region" description="Helical" evidence="2">
    <location>
        <begin position="33"/>
        <end position="53"/>
    </location>
</feature>
<feature type="transmembrane region" description="Helical" evidence="2">
    <location>
        <begin position="77"/>
        <end position="98"/>
    </location>
</feature>
<feature type="transmembrane region" description="Helical" evidence="2">
    <location>
        <begin position="113"/>
        <end position="133"/>
    </location>
</feature>
<feature type="transmembrane region" description="Helical" evidence="2">
    <location>
        <begin position="178"/>
        <end position="198"/>
    </location>
</feature>
<feature type="transmembrane region" description="Helical" evidence="2">
    <location>
        <begin position="226"/>
        <end position="246"/>
    </location>
</feature>
<feature type="transmembrane region" description="Helical" evidence="2">
    <location>
        <begin position="288"/>
        <end position="308"/>
    </location>
</feature>
<feature type="transmembrane region" description="Helical" evidence="2">
    <location>
        <begin position="320"/>
        <end position="340"/>
    </location>
</feature>
<feature type="transmembrane region" description="Helical" evidence="2">
    <location>
        <begin position="347"/>
        <end position="367"/>
    </location>
</feature>
<feature type="binding site" description="axial binding residue" evidence="2">
    <location>
        <position position="83"/>
    </location>
    <ligand>
        <name>heme b</name>
        <dbReference type="ChEBI" id="CHEBI:60344"/>
        <label>b562</label>
    </ligand>
    <ligandPart>
        <name>Fe</name>
        <dbReference type="ChEBI" id="CHEBI:18248"/>
    </ligandPart>
</feature>
<feature type="binding site" description="axial binding residue" evidence="2">
    <location>
        <position position="97"/>
    </location>
    <ligand>
        <name>heme b</name>
        <dbReference type="ChEBI" id="CHEBI:60344"/>
        <label>b566</label>
    </ligand>
    <ligandPart>
        <name>Fe</name>
        <dbReference type="ChEBI" id="CHEBI:18248"/>
    </ligandPart>
</feature>
<feature type="binding site" description="axial binding residue" evidence="2">
    <location>
        <position position="182"/>
    </location>
    <ligand>
        <name>heme b</name>
        <dbReference type="ChEBI" id="CHEBI:60344"/>
        <label>b562</label>
    </ligand>
    <ligandPart>
        <name>Fe</name>
        <dbReference type="ChEBI" id="CHEBI:18248"/>
    </ligandPart>
</feature>
<feature type="binding site" description="axial binding residue" evidence="2">
    <location>
        <position position="196"/>
    </location>
    <ligand>
        <name>heme b</name>
        <dbReference type="ChEBI" id="CHEBI:60344"/>
        <label>b566</label>
    </ligand>
    <ligandPart>
        <name>Fe</name>
        <dbReference type="ChEBI" id="CHEBI:18248"/>
    </ligandPart>
</feature>
<feature type="binding site" evidence="2">
    <location>
        <position position="201"/>
    </location>
    <ligand>
        <name>a ubiquinone</name>
        <dbReference type="ChEBI" id="CHEBI:16389"/>
    </ligand>
</feature>
<name>CYB_STEPA</name>
<organism>
    <name type="scientific">Steatomys parvus</name>
    <name type="common">Tiny fat mouse</name>
    <dbReference type="NCBI Taxonomy" id="107268"/>
    <lineage>
        <taxon>Eukaryota</taxon>
        <taxon>Metazoa</taxon>
        <taxon>Chordata</taxon>
        <taxon>Craniata</taxon>
        <taxon>Vertebrata</taxon>
        <taxon>Euteleostomi</taxon>
        <taxon>Mammalia</taxon>
        <taxon>Eutheria</taxon>
        <taxon>Euarchontoglires</taxon>
        <taxon>Glires</taxon>
        <taxon>Rodentia</taxon>
        <taxon>Myomorpha</taxon>
        <taxon>Muroidea</taxon>
        <taxon>Nesomyidae</taxon>
        <taxon>Dendromurinae</taxon>
        <taxon>Steatomys</taxon>
    </lineage>
</organism>
<comment type="function">
    <text evidence="2">Component of the ubiquinol-cytochrome c reductase complex (complex III or cytochrome b-c1 complex) that is part of the mitochondrial respiratory chain. The b-c1 complex mediates electron transfer from ubiquinol to cytochrome c. Contributes to the generation of a proton gradient across the mitochondrial membrane that is then used for ATP synthesis.</text>
</comment>
<comment type="cofactor">
    <cofactor evidence="2">
        <name>heme b</name>
        <dbReference type="ChEBI" id="CHEBI:60344"/>
    </cofactor>
    <text evidence="2">Binds 2 heme b groups non-covalently.</text>
</comment>
<comment type="subunit">
    <text evidence="2">The cytochrome bc1 complex contains 11 subunits: 3 respiratory subunits (MT-CYB, CYC1 and UQCRFS1), 2 core proteins (UQCRC1 and UQCRC2) and 6 low-molecular weight proteins (UQCRH/QCR6, UQCRB/QCR7, UQCRQ/QCR8, UQCR10/QCR9, UQCR11/QCR10 and a cleavage product of UQCRFS1). This cytochrome bc1 complex then forms a dimer.</text>
</comment>
<comment type="subcellular location">
    <subcellularLocation>
        <location evidence="2">Mitochondrion inner membrane</location>
        <topology evidence="2">Multi-pass membrane protein</topology>
    </subcellularLocation>
</comment>
<comment type="miscellaneous">
    <text evidence="1">Heme 1 (or BL or b562) is low-potential and absorbs at about 562 nm, and heme 2 (or BH or b566) is high-potential and absorbs at about 566 nm.</text>
</comment>
<comment type="similarity">
    <text evidence="3 4">Belongs to the cytochrome b family.</text>
</comment>
<comment type="caution">
    <text evidence="2">The full-length protein contains only eight transmembrane helices, not nine as predicted by bioinformatics tools.</text>
</comment>
<accession>Q9T3Q2</accession>
<sequence length="380" mass="42856">MTNIRKTHPLFKILNDSFIDLPTPSNISSWWNFGSLLGVCLVVQILTGLFLAMHYTSDTTTAFSSVTHICRDVNYGWLIRYLHANGASMFFICLFIHVGRGIYYGSFTSVETWNVGIILLFTVMATAFMGYVLPWGQMSFWGATVITNLLSAIPYIGTTLVEWIWGGFSVDKATLTRFFAFHFILPFIIAAMVMVHLLFLHEKGSNNPTGLNSNADKIPFHPYYTIKDILGIFILILTLISLVLFAPDLLGDPDNYTPANPLNTPPHIKPEWYFLFAYAILRSVPNKLGGVLALILSILILSILPHLYTSKLRSLMFRPLTQFCYWLLVADILILTWIGGQPVEYPFITIGQLASTLYFSIIVILMPISAIIEDEMLKMN</sequence>
<proteinExistence type="inferred from homology"/>
<reference key="1">
    <citation type="journal article" date="1999" name="Cladistics">
        <title>Molecular phylogeny and biogeography of Madagascar's native rodents (Muridae: Nesomyinae): a test of the single origin hypothesis.</title>
        <authorList>
            <person name="Jansa S.A."/>
            <person name="Goodman S.M."/>
            <person name="Tucker P.K."/>
        </authorList>
    </citation>
    <scope>NUCLEOTIDE SEQUENCE [GENOMIC DNA]</scope>
    <source>
        <strain>Isolate Spar532</strain>
        <strain>Isolate Spar533</strain>
    </source>
</reference>